<evidence type="ECO:0000250" key="1">
    <source>
        <dbReference type="UniProtKB" id="A6NKD9"/>
    </source>
</evidence>
<evidence type="ECO:0000250" key="2">
    <source>
        <dbReference type="UniProtKB" id="E9Q6B2"/>
    </source>
</evidence>
<evidence type="ECO:0000255" key="3"/>
<evidence type="ECO:0000256" key="4">
    <source>
        <dbReference type="SAM" id="MobiDB-lite"/>
    </source>
</evidence>
<evidence type="ECO:0000305" key="5"/>
<sequence length="391" mass="44164">MAKNITDVSRDDLSKVSDEELQKCSKEELLRRLRKVDAEKMNLMLEHGNMMKDVNRRLQLHLHEIRSLKEVNQKLQEDNQELRELCCFLDDDRQKGKKLSREWQRFGRYTASVMWKEVGVFQQKLKELESNQDSVMRENLELKEIIIMLDDERNGAGSRSSIDSQSSLSNLNGGSATVRDVGDGSSTSSTGSAGSPDHHHSHIHKPTEGKITSIRRSMDDLSTNHLLRNIPNGLNDSSSNYIRQLETKVRILEDDNKQLLSQQGSVGDLKTLRKGLSLYHSESQLSSLSQFQDTLQNGSIRIAGGDLAPTVTGYLPAAQKPEAVVHAMKVLEVHENLDRKIPEDYEEDLSEKEKAIVREMCNVVWRKLGDAAGTKPSIRQHLSGNQFKGPL</sequence>
<keyword id="KW-0965">Cell junction</keyword>
<keyword id="KW-0175">Coiled coil</keyword>
<keyword id="KW-0217">Developmental protein</keyword>
<keyword id="KW-1185">Reference proteome</keyword>
<keyword id="KW-0796">Tight junction</keyword>
<comment type="function">
    <text evidence="1 2">May play a role in cell-cell adhesion and epithelium development through its interaction with proteins of the beta-catenin family (By similarity). May play an important role in cortical development, especially in the maintenance of radial glia (By similarity).</text>
</comment>
<comment type="subcellular location">
    <subcellularLocation>
        <location evidence="2">Cell junction</location>
        <location evidence="2">Tight junction</location>
    </subcellularLocation>
    <subcellularLocation>
        <location evidence="1">Cell junction</location>
        <location evidence="1">Adherens junction</location>
    </subcellularLocation>
</comment>
<comment type="similarity">
    <text evidence="5">Belongs to the CCDC85 family.</text>
</comment>
<reference key="1">
    <citation type="submission" date="2006-08" db="EMBL/GenBank/DDBJ databases">
        <authorList>
            <consortium name="NIH - Zebrafish Gene Collection (ZGC) project"/>
        </authorList>
    </citation>
    <scope>NUCLEOTIDE SEQUENCE [LARGE SCALE MRNA]</scope>
    <source>
        <tissue>Skin</tissue>
    </source>
</reference>
<dbReference type="EMBL" id="BC122223">
    <property type="protein sequence ID" value="AAI22224.1"/>
    <property type="molecule type" value="mRNA"/>
</dbReference>
<dbReference type="RefSeq" id="NP_001038849.1">
    <property type="nucleotide sequence ID" value="NM_001045384.1"/>
</dbReference>
<dbReference type="SMR" id="Q0P485"/>
<dbReference type="FunCoup" id="Q0P485">
    <property type="interactions" value="761"/>
</dbReference>
<dbReference type="STRING" id="7955.ENSDARP00000095769"/>
<dbReference type="PaxDb" id="7955-ENSDARP00000095769"/>
<dbReference type="Ensembl" id="ENSDART00000104999">
    <property type="protein sequence ID" value="ENSDARP00000095769"/>
    <property type="gene ID" value="ENSDARG00000005232"/>
</dbReference>
<dbReference type="GeneID" id="751667"/>
<dbReference type="KEGG" id="dre:751667"/>
<dbReference type="AGR" id="ZFIN:ZDB-GENE-060825-198"/>
<dbReference type="CTD" id="751667"/>
<dbReference type="ZFIN" id="ZDB-GENE-060825-198">
    <property type="gene designation" value="ccdc85ca"/>
</dbReference>
<dbReference type="eggNOG" id="KOG3819">
    <property type="taxonomic scope" value="Eukaryota"/>
</dbReference>
<dbReference type="HOGENOM" id="CLU_028762_0_0_1"/>
<dbReference type="InParanoid" id="Q0P485"/>
<dbReference type="OMA" id="TDNEKMN"/>
<dbReference type="OrthoDB" id="10056395at2759"/>
<dbReference type="PhylomeDB" id="Q0P485"/>
<dbReference type="TreeFam" id="TF320243"/>
<dbReference type="PRO" id="PR:Q0P485"/>
<dbReference type="Proteomes" id="UP000000437">
    <property type="component" value="Chromosome 17"/>
</dbReference>
<dbReference type="Bgee" id="ENSDARG00000005232">
    <property type="expression patterns" value="Expressed in retina and 19 other cell types or tissues"/>
</dbReference>
<dbReference type="GO" id="GO:0005912">
    <property type="term" value="C:adherens junction"/>
    <property type="evidence" value="ECO:0007669"/>
    <property type="project" value="UniProtKB-SubCell"/>
</dbReference>
<dbReference type="GO" id="GO:0043296">
    <property type="term" value="C:apical junction complex"/>
    <property type="evidence" value="ECO:0000318"/>
    <property type="project" value="GO_Central"/>
</dbReference>
<dbReference type="GO" id="GO:0005923">
    <property type="term" value="C:bicellular tight junction"/>
    <property type="evidence" value="ECO:0007669"/>
    <property type="project" value="UniProtKB-SubCell"/>
</dbReference>
<dbReference type="InterPro" id="IPR019359">
    <property type="entry name" value="CCDC85"/>
</dbReference>
<dbReference type="PANTHER" id="PTHR13546:SF14">
    <property type="entry name" value="COILED-COIL DOMAIN-CONTAINING PROTEIN 85C"/>
    <property type="match status" value="1"/>
</dbReference>
<dbReference type="PANTHER" id="PTHR13546">
    <property type="entry name" value="RE60986P"/>
    <property type="match status" value="1"/>
</dbReference>
<dbReference type="Pfam" id="PF10226">
    <property type="entry name" value="CCDC85"/>
    <property type="match status" value="1"/>
</dbReference>
<feature type="chain" id="PRO_0000345411" description="Coiled-coil domain-containing protein 85C-A">
    <location>
        <begin position="1"/>
        <end position="391"/>
    </location>
</feature>
<feature type="region of interest" description="Disordered" evidence="4">
    <location>
        <begin position="154"/>
        <end position="212"/>
    </location>
</feature>
<feature type="coiled-coil region" evidence="3">
    <location>
        <begin position="23"/>
        <end position="87"/>
    </location>
</feature>
<feature type="coiled-coil region" evidence="3">
    <location>
        <begin position="121"/>
        <end position="146"/>
    </location>
</feature>
<feature type="compositionally biased region" description="Low complexity" evidence="4">
    <location>
        <begin position="158"/>
        <end position="175"/>
    </location>
</feature>
<feature type="compositionally biased region" description="Low complexity" evidence="4">
    <location>
        <begin position="183"/>
        <end position="195"/>
    </location>
</feature>
<accession>Q0P485</accession>
<gene>
    <name type="primary">ccdc85ca</name>
    <name type="ORF">zgc:153295</name>
</gene>
<organism>
    <name type="scientific">Danio rerio</name>
    <name type="common">Zebrafish</name>
    <name type="synonym">Brachydanio rerio</name>
    <dbReference type="NCBI Taxonomy" id="7955"/>
    <lineage>
        <taxon>Eukaryota</taxon>
        <taxon>Metazoa</taxon>
        <taxon>Chordata</taxon>
        <taxon>Craniata</taxon>
        <taxon>Vertebrata</taxon>
        <taxon>Euteleostomi</taxon>
        <taxon>Actinopterygii</taxon>
        <taxon>Neopterygii</taxon>
        <taxon>Teleostei</taxon>
        <taxon>Ostariophysi</taxon>
        <taxon>Cypriniformes</taxon>
        <taxon>Danionidae</taxon>
        <taxon>Danioninae</taxon>
        <taxon>Danio</taxon>
    </lineage>
</organism>
<name>C85CA_DANRE</name>
<proteinExistence type="evidence at transcript level"/>
<protein>
    <recommendedName>
        <fullName>Coiled-coil domain-containing protein 85C-A</fullName>
    </recommendedName>
</protein>